<accession>A7H564</accession>
<evidence type="ECO:0000255" key="1">
    <source>
        <dbReference type="HAMAP-Rule" id="MF_01334"/>
    </source>
</evidence>
<evidence type="ECO:0000305" key="2"/>
<keyword id="KW-0687">Ribonucleoprotein</keyword>
<keyword id="KW-0689">Ribosomal protein</keyword>
<keyword id="KW-0694">RNA-binding</keyword>
<keyword id="KW-0699">rRNA-binding</keyword>
<reference key="1">
    <citation type="submission" date="2007-07" db="EMBL/GenBank/DDBJ databases">
        <title>Complete genome sequence of Campylobacter jejuni subsp doylei 269.97 isolated from human blood.</title>
        <authorList>
            <person name="Fouts D.E."/>
            <person name="Mongodin E.F."/>
            <person name="Puiu D."/>
            <person name="Sebastian Y."/>
            <person name="Miller W.G."/>
            <person name="Mandrell R.E."/>
            <person name="Lastovica A.J."/>
            <person name="Nelson K.E."/>
        </authorList>
    </citation>
    <scope>NUCLEOTIDE SEQUENCE [LARGE SCALE GENOMIC DNA]</scope>
    <source>
        <strain>ATCC BAA-1458 / RM4099 / 269.97</strain>
    </source>
</reference>
<gene>
    <name evidence="1" type="primary">rplY</name>
    <name evidence="1" type="synonym">ctc</name>
    <name type="ordered locus">JJD26997_1654</name>
</gene>
<proteinExistence type="inferred from homology"/>
<sequence length="178" mass="19461">MLEGIVRESIGRKAAKALKRDGYLIANIYGKGLENINAAFKVNEFIKEVRKKTTLIFDVKVGSQTLSVVVVDYQKDPVTAELKHVDLKVAQKGVISKYMVPVKITGTAIGLKNKGVLIQSKRRLKVKCAAENLPNFFELDVSKLDVGDALLVRDIVVPAGVTMIDADRVAVVGVEKAR</sequence>
<comment type="function">
    <text evidence="1">This is one of the proteins that binds to the 5S RNA in the ribosome where it forms part of the central protuberance.</text>
</comment>
<comment type="subunit">
    <text evidence="1">Part of the 50S ribosomal subunit; part of the 5S rRNA/L5/L18/L25 subcomplex. Contacts the 5S rRNA. Binds to the 5S rRNA independently of L5 and L18.</text>
</comment>
<comment type="similarity">
    <text evidence="1">Belongs to the bacterial ribosomal protein bL25 family. CTC subfamily.</text>
</comment>
<organism>
    <name type="scientific">Campylobacter jejuni subsp. doylei (strain ATCC BAA-1458 / RM4099 / 269.97)</name>
    <dbReference type="NCBI Taxonomy" id="360109"/>
    <lineage>
        <taxon>Bacteria</taxon>
        <taxon>Pseudomonadati</taxon>
        <taxon>Campylobacterota</taxon>
        <taxon>Epsilonproteobacteria</taxon>
        <taxon>Campylobacterales</taxon>
        <taxon>Campylobacteraceae</taxon>
        <taxon>Campylobacter</taxon>
    </lineage>
</organism>
<protein>
    <recommendedName>
        <fullName evidence="1">Large ribosomal subunit protein bL25</fullName>
    </recommendedName>
    <alternativeName>
        <fullName evidence="2">50S ribosomal protein L25</fullName>
    </alternativeName>
    <alternativeName>
        <fullName evidence="1">General stress protein CTC</fullName>
    </alternativeName>
</protein>
<dbReference type="EMBL" id="CP000768">
    <property type="protein sequence ID" value="ABS43130.1"/>
    <property type="molecule type" value="Genomic_DNA"/>
</dbReference>
<dbReference type="SMR" id="A7H564"/>
<dbReference type="KEGG" id="cjd:JJD26997_1654"/>
<dbReference type="HOGENOM" id="CLU_075939_2_2_7"/>
<dbReference type="Proteomes" id="UP000002302">
    <property type="component" value="Chromosome"/>
</dbReference>
<dbReference type="GO" id="GO:0022625">
    <property type="term" value="C:cytosolic large ribosomal subunit"/>
    <property type="evidence" value="ECO:0007669"/>
    <property type="project" value="TreeGrafter"/>
</dbReference>
<dbReference type="GO" id="GO:0008097">
    <property type="term" value="F:5S rRNA binding"/>
    <property type="evidence" value="ECO:0007669"/>
    <property type="project" value="InterPro"/>
</dbReference>
<dbReference type="GO" id="GO:0003735">
    <property type="term" value="F:structural constituent of ribosome"/>
    <property type="evidence" value="ECO:0007669"/>
    <property type="project" value="InterPro"/>
</dbReference>
<dbReference type="GO" id="GO:0006412">
    <property type="term" value="P:translation"/>
    <property type="evidence" value="ECO:0007669"/>
    <property type="project" value="UniProtKB-UniRule"/>
</dbReference>
<dbReference type="CDD" id="cd00495">
    <property type="entry name" value="Ribosomal_L25_TL5_CTC"/>
    <property type="match status" value="1"/>
</dbReference>
<dbReference type="Gene3D" id="2.170.120.20">
    <property type="entry name" value="Ribosomal protein L25, beta domain"/>
    <property type="match status" value="1"/>
</dbReference>
<dbReference type="Gene3D" id="2.40.240.10">
    <property type="entry name" value="Ribosomal Protein L25, Chain P"/>
    <property type="match status" value="1"/>
</dbReference>
<dbReference type="HAMAP" id="MF_01334">
    <property type="entry name" value="Ribosomal_bL25_CTC"/>
    <property type="match status" value="1"/>
</dbReference>
<dbReference type="InterPro" id="IPR020056">
    <property type="entry name" value="Rbsml_bL25/Gln-tRNA_synth_N"/>
</dbReference>
<dbReference type="InterPro" id="IPR011035">
    <property type="entry name" value="Ribosomal_bL25/Gln-tRNA_synth"/>
</dbReference>
<dbReference type="InterPro" id="IPR020057">
    <property type="entry name" value="Ribosomal_bL25_b-dom"/>
</dbReference>
<dbReference type="InterPro" id="IPR037121">
    <property type="entry name" value="Ribosomal_bL25_C"/>
</dbReference>
<dbReference type="InterPro" id="IPR001021">
    <property type="entry name" value="Ribosomal_bL25_long"/>
</dbReference>
<dbReference type="InterPro" id="IPR029751">
    <property type="entry name" value="Ribosomal_L25_dom"/>
</dbReference>
<dbReference type="InterPro" id="IPR020930">
    <property type="entry name" value="Ribosomal_uL5_bac-type"/>
</dbReference>
<dbReference type="NCBIfam" id="TIGR00731">
    <property type="entry name" value="bL25_bact_ctc"/>
    <property type="match status" value="1"/>
</dbReference>
<dbReference type="NCBIfam" id="NF004129">
    <property type="entry name" value="PRK05618.1-4"/>
    <property type="match status" value="1"/>
</dbReference>
<dbReference type="PANTHER" id="PTHR33284">
    <property type="entry name" value="RIBOSOMAL PROTEIN L25/GLN-TRNA SYNTHETASE, ANTI-CODON-BINDING DOMAIN-CONTAINING PROTEIN"/>
    <property type="match status" value="1"/>
</dbReference>
<dbReference type="PANTHER" id="PTHR33284:SF1">
    <property type="entry name" value="RIBOSOMAL PROTEIN L25_GLN-TRNA SYNTHETASE, ANTI-CODON-BINDING DOMAIN-CONTAINING PROTEIN"/>
    <property type="match status" value="1"/>
</dbReference>
<dbReference type="Pfam" id="PF01386">
    <property type="entry name" value="Ribosomal_L25p"/>
    <property type="match status" value="1"/>
</dbReference>
<dbReference type="Pfam" id="PF14693">
    <property type="entry name" value="Ribosomal_TL5_C"/>
    <property type="match status" value="1"/>
</dbReference>
<dbReference type="SUPFAM" id="SSF50715">
    <property type="entry name" value="Ribosomal protein L25-like"/>
    <property type="match status" value="1"/>
</dbReference>
<name>RL25_CAMJD</name>
<feature type="chain" id="PRO_1000052880" description="Large ribosomal subunit protein bL25">
    <location>
        <begin position="1"/>
        <end position="178"/>
    </location>
</feature>